<gene>
    <name type="ordered locus">Ssed_1870</name>
</gene>
<proteinExistence type="inferred from homology"/>
<protein>
    <recommendedName>
        <fullName evidence="1">Putative phosphoenolpyruvate synthase regulatory protein</fullName>
        <shortName evidence="1">PEP synthase regulatory protein</shortName>
        <shortName evidence="1">PSRP</shortName>
        <ecNumber evidence="1">2.7.11.33</ecNumber>
        <ecNumber evidence="1">2.7.4.28</ecNumber>
    </recommendedName>
    <alternativeName>
        <fullName evidence="1">Pyruvate, water dikinase regulatory protein</fullName>
    </alternativeName>
</protein>
<dbReference type="EC" id="2.7.11.33" evidence="1"/>
<dbReference type="EC" id="2.7.4.28" evidence="1"/>
<dbReference type="EMBL" id="CP000821">
    <property type="protein sequence ID" value="ABV36481.1"/>
    <property type="molecule type" value="Genomic_DNA"/>
</dbReference>
<dbReference type="RefSeq" id="WP_012142217.1">
    <property type="nucleotide sequence ID" value="NC_009831.1"/>
</dbReference>
<dbReference type="SMR" id="A8FUF8"/>
<dbReference type="STRING" id="425104.Ssed_1870"/>
<dbReference type="KEGG" id="sse:Ssed_1870"/>
<dbReference type="eggNOG" id="COG1806">
    <property type="taxonomic scope" value="Bacteria"/>
</dbReference>
<dbReference type="HOGENOM" id="CLU_046206_1_0_6"/>
<dbReference type="OrthoDB" id="9782201at2"/>
<dbReference type="Proteomes" id="UP000002015">
    <property type="component" value="Chromosome"/>
</dbReference>
<dbReference type="GO" id="GO:0043531">
    <property type="term" value="F:ADP binding"/>
    <property type="evidence" value="ECO:0007669"/>
    <property type="project" value="UniProtKB-UniRule"/>
</dbReference>
<dbReference type="GO" id="GO:0005524">
    <property type="term" value="F:ATP binding"/>
    <property type="evidence" value="ECO:0007669"/>
    <property type="project" value="InterPro"/>
</dbReference>
<dbReference type="GO" id="GO:0016776">
    <property type="term" value="F:phosphotransferase activity, phosphate group as acceptor"/>
    <property type="evidence" value="ECO:0007669"/>
    <property type="project" value="UniProtKB-UniRule"/>
</dbReference>
<dbReference type="GO" id="GO:0004674">
    <property type="term" value="F:protein serine/threonine kinase activity"/>
    <property type="evidence" value="ECO:0007669"/>
    <property type="project" value="UniProtKB-UniRule"/>
</dbReference>
<dbReference type="HAMAP" id="MF_01062">
    <property type="entry name" value="PSRP"/>
    <property type="match status" value="1"/>
</dbReference>
<dbReference type="InterPro" id="IPR005177">
    <property type="entry name" value="Kinase-pyrophosphorylase"/>
</dbReference>
<dbReference type="InterPro" id="IPR026530">
    <property type="entry name" value="PSRP"/>
</dbReference>
<dbReference type="NCBIfam" id="NF003742">
    <property type="entry name" value="PRK05339.1"/>
    <property type="match status" value="1"/>
</dbReference>
<dbReference type="PANTHER" id="PTHR31756">
    <property type="entry name" value="PYRUVATE, PHOSPHATE DIKINASE REGULATORY PROTEIN 1, CHLOROPLASTIC"/>
    <property type="match status" value="1"/>
</dbReference>
<dbReference type="PANTHER" id="PTHR31756:SF3">
    <property type="entry name" value="PYRUVATE, PHOSPHATE DIKINASE REGULATORY PROTEIN 1, CHLOROPLASTIC"/>
    <property type="match status" value="1"/>
</dbReference>
<dbReference type="Pfam" id="PF03618">
    <property type="entry name" value="Kinase-PPPase"/>
    <property type="match status" value="1"/>
</dbReference>
<reference key="1">
    <citation type="submission" date="2007-08" db="EMBL/GenBank/DDBJ databases">
        <title>Complete sequence of Shewanella sediminis HAW-EB3.</title>
        <authorList>
            <consortium name="US DOE Joint Genome Institute"/>
            <person name="Copeland A."/>
            <person name="Lucas S."/>
            <person name="Lapidus A."/>
            <person name="Barry K."/>
            <person name="Glavina del Rio T."/>
            <person name="Dalin E."/>
            <person name="Tice H."/>
            <person name="Pitluck S."/>
            <person name="Chertkov O."/>
            <person name="Brettin T."/>
            <person name="Bruce D."/>
            <person name="Detter J.C."/>
            <person name="Han C."/>
            <person name="Schmutz J."/>
            <person name="Larimer F."/>
            <person name="Land M."/>
            <person name="Hauser L."/>
            <person name="Kyrpides N."/>
            <person name="Kim E."/>
            <person name="Zhao J.-S."/>
            <person name="Richardson P."/>
        </authorList>
    </citation>
    <scope>NUCLEOTIDE SEQUENCE [LARGE SCALE GENOMIC DNA]</scope>
    <source>
        <strain>HAW-EB3</strain>
    </source>
</reference>
<sequence length="270" mass="30686">MLRKVFYISDGTAITAEVFGHAVLSQFPVEFDALTIPFVETEAKAHDVKLQINDCFITTGERPLVFHSIVKAEIRDIIYSSEGLDYDFLNTFVAPLELQLGMKASPVVHRTHGKANEGYEARIDAINYTMDNDDGQTLKNIDKADLVLLGVSRCGKTPSSLYLSMQFGIKAANYPFVEDDMDNLKLPTALKENKSKLFGLTIDPVRLHEIRKSRMDNSRYSSLRQCRIEVKEVEMMYKRERIPFVNTTNHSVEEIATKILDVTGLERHMF</sequence>
<keyword id="KW-0418">Kinase</keyword>
<keyword id="KW-0547">Nucleotide-binding</keyword>
<keyword id="KW-1185">Reference proteome</keyword>
<keyword id="KW-0723">Serine/threonine-protein kinase</keyword>
<keyword id="KW-0808">Transferase</keyword>
<accession>A8FUF8</accession>
<comment type="function">
    <text evidence="1">Bifunctional serine/threonine kinase and phosphorylase involved in the regulation of the phosphoenolpyruvate synthase (PEPS) by catalyzing its phosphorylation/dephosphorylation.</text>
</comment>
<comment type="catalytic activity">
    <reaction evidence="1">
        <text>[pyruvate, water dikinase] + ADP = [pyruvate, water dikinase]-phosphate + AMP + H(+)</text>
        <dbReference type="Rhea" id="RHEA:46020"/>
        <dbReference type="Rhea" id="RHEA-COMP:11425"/>
        <dbReference type="Rhea" id="RHEA-COMP:11426"/>
        <dbReference type="ChEBI" id="CHEBI:15378"/>
        <dbReference type="ChEBI" id="CHEBI:43176"/>
        <dbReference type="ChEBI" id="CHEBI:68546"/>
        <dbReference type="ChEBI" id="CHEBI:456215"/>
        <dbReference type="ChEBI" id="CHEBI:456216"/>
        <dbReference type="EC" id="2.7.11.33"/>
    </reaction>
</comment>
<comment type="catalytic activity">
    <reaction evidence="1">
        <text>[pyruvate, water dikinase]-phosphate + phosphate + H(+) = [pyruvate, water dikinase] + diphosphate</text>
        <dbReference type="Rhea" id="RHEA:48580"/>
        <dbReference type="Rhea" id="RHEA-COMP:11425"/>
        <dbReference type="Rhea" id="RHEA-COMP:11426"/>
        <dbReference type="ChEBI" id="CHEBI:15378"/>
        <dbReference type="ChEBI" id="CHEBI:33019"/>
        <dbReference type="ChEBI" id="CHEBI:43176"/>
        <dbReference type="ChEBI" id="CHEBI:43474"/>
        <dbReference type="ChEBI" id="CHEBI:68546"/>
        <dbReference type="EC" id="2.7.4.28"/>
    </reaction>
</comment>
<comment type="similarity">
    <text evidence="1">Belongs to the pyruvate, phosphate/water dikinase regulatory protein family. PSRP subfamily.</text>
</comment>
<name>PSRP_SHESH</name>
<feature type="chain" id="PRO_1000084475" description="Putative phosphoenolpyruvate synthase regulatory protein">
    <location>
        <begin position="1"/>
        <end position="270"/>
    </location>
</feature>
<feature type="binding site" evidence="1">
    <location>
        <begin position="150"/>
        <end position="157"/>
    </location>
    <ligand>
        <name>ADP</name>
        <dbReference type="ChEBI" id="CHEBI:456216"/>
    </ligand>
</feature>
<organism>
    <name type="scientific">Shewanella sediminis (strain HAW-EB3)</name>
    <dbReference type="NCBI Taxonomy" id="425104"/>
    <lineage>
        <taxon>Bacteria</taxon>
        <taxon>Pseudomonadati</taxon>
        <taxon>Pseudomonadota</taxon>
        <taxon>Gammaproteobacteria</taxon>
        <taxon>Alteromonadales</taxon>
        <taxon>Shewanellaceae</taxon>
        <taxon>Shewanella</taxon>
    </lineage>
</organism>
<evidence type="ECO:0000255" key="1">
    <source>
        <dbReference type="HAMAP-Rule" id="MF_01062"/>
    </source>
</evidence>